<proteinExistence type="inferred from homology"/>
<evidence type="ECO:0000255" key="1">
    <source>
        <dbReference type="HAMAP-Rule" id="MF_00531"/>
    </source>
</evidence>
<evidence type="ECO:0000305" key="2"/>
<organism>
    <name type="scientific">Escherichia coli O1:K1 / APEC</name>
    <dbReference type="NCBI Taxonomy" id="405955"/>
    <lineage>
        <taxon>Bacteria</taxon>
        <taxon>Pseudomonadati</taxon>
        <taxon>Pseudomonadota</taxon>
        <taxon>Gammaproteobacteria</taxon>
        <taxon>Enterobacterales</taxon>
        <taxon>Enterobacteriaceae</taxon>
        <taxon>Escherichia</taxon>
    </lineage>
</organism>
<dbReference type="EMBL" id="CP000468">
    <property type="protein sequence ID" value="ABJ02794.1"/>
    <property type="molecule type" value="Genomic_DNA"/>
</dbReference>
<dbReference type="RefSeq" id="WP_001138117.1">
    <property type="nucleotide sequence ID" value="NZ_CADILS010000044.1"/>
</dbReference>
<dbReference type="SMR" id="A1AGK4"/>
<dbReference type="GeneID" id="98390438"/>
<dbReference type="KEGG" id="ecv:APECO1_3134"/>
<dbReference type="HOGENOM" id="CLU_144911_0_1_6"/>
<dbReference type="Proteomes" id="UP000008216">
    <property type="component" value="Chromosome"/>
</dbReference>
<dbReference type="GO" id="GO:0005737">
    <property type="term" value="C:cytoplasm"/>
    <property type="evidence" value="ECO:0007669"/>
    <property type="project" value="UniProtKB-ARBA"/>
</dbReference>
<dbReference type="GO" id="GO:0015935">
    <property type="term" value="C:small ribosomal subunit"/>
    <property type="evidence" value="ECO:0007669"/>
    <property type="project" value="InterPro"/>
</dbReference>
<dbReference type="GO" id="GO:0019843">
    <property type="term" value="F:rRNA binding"/>
    <property type="evidence" value="ECO:0007669"/>
    <property type="project" value="UniProtKB-UniRule"/>
</dbReference>
<dbReference type="GO" id="GO:0003735">
    <property type="term" value="F:structural constituent of ribosome"/>
    <property type="evidence" value="ECO:0007669"/>
    <property type="project" value="InterPro"/>
</dbReference>
<dbReference type="GO" id="GO:0000028">
    <property type="term" value="P:ribosomal small subunit assembly"/>
    <property type="evidence" value="ECO:0007669"/>
    <property type="project" value="TreeGrafter"/>
</dbReference>
<dbReference type="GO" id="GO:0006412">
    <property type="term" value="P:translation"/>
    <property type="evidence" value="ECO:0007669"/>
    <property type="project" value="UniProtKB-UniRule"/>
</dbReference>
<dbReference type="FunFam" id="3.30.860.10:FF:000001">
    <property type="entry name" value="30S ribosomal protein S19"/>
    <property type="match status" value="1"/>
</dbReference>
<dbReference type="Gene3D" id="3.30.860.10">
    <property type="entry name" value="30s Ribosomal Protein S19, Chain A"/>
    <property type="match status" value="1"/>
</dbReference>
<dbReference type="HAMAP" id="MF_00531">
    <property type="entry name" value="Ribosomal_uS19"/>
    <property type="match status" value="1"/>
</dbReference>
<dbReference type="InterPro" id="IPR002222">
    <property type="entry name" value="Ribosomal_uS19"/>
</dbReference>
<dbReference type="InterPro" id="IPR005732">
    <property type="entry name" value="Ribosomal_uS19_bac-type"/>
</dbReference>
<dbReference type="InterPro" id="IPR020934">
    <property type="entry name" value="Ribosomal_uS19_CS"/>
</dbReference>
<dbReference type="InterPro" id="IPR023575">
    <property type="entry name" value="Ribosomal_uS19_SF"/>
</dbReference>
<dbReference type="NCBIfam" id="TIGR01050">
    <property type="entry name" value="rpsS_bact"/>
    <property type="match status" value="1"/>
</dbReference>
<dbReference type="PANTHER" id="PTHR11880">
    <property type="entry name" value="RIBOSOMAL PROTEIN S19P FAMILY MEMBER"/>
    <property type="match status" value="1"/>
</dbReference>
<dbReference type="PANTHER" id="PTHR11880:SF8">
    <property type="entry name" value="SMALL RIBOSOMAL SUBUNIT PROTEIN US19M"/>
    <property type="match status" value="1"/>
</dbReference>
<dbReference type="Pfam" id="PF00203">
    <property type="entry name" value="Ribosomal_S19"/>
    <property type="match status" value="1"/>
</dbReference>
<dbReference type="PIRSF" id="PIRSF002144">
    <property type="entry name" value="Ribosomal_S19"/>
    <property type="match status" value="1"/>
</dbReference>
<dbReference type="PRINTS" id="PR00975">
    <property type="entry name" value="RIBOSOMALS19"/>
</dbReference>
<dbReference type="SUPFAM" id="SSF54570">
    <property type="entry name" value="Ribosomal protein S19"/>
    <property type="match status" value="1"/>
</dbReference>
<dbReference type="PROSITE" id="PS00323">
    <property type="entry name" value="RIBOSOMAL_S19"/>
    <property type="match status" value="1"/>
</dbReference>
<keyword id="KW-1185">Reference proteome</keyword>
<keyword id="KW-0687">Ribonucleoprotein</keyword>
<keyword id="KW-0689">Ribosomal protein</keyword>
<keyword id="KW-0694">RNA-binding</keyword>
<keyword id="KW-0699">rRNA-binding</keyword>
<accession>A1AGK4</accession>
<feature type="chain" id="PRO_1000051045" description="Small ribosomal subunit protein uS19">
    <location>
        <begin position="1"/>
        <end position="92"/>
    </location>
</feature>
<comment type="function">
    <text evidence="1">Protein S19 forms a complex with S13 that binds strongly to the 16S ribosomal RNA.</text>
</comment>
<comment type="similarity">
    <text evidence="1">Belongs to the universal ribosomal protein uS19 family.</text>
</comment>
<protein>
    <recommendedName>
        <fullName evidence="1">Small ribosomal subunit protein uS19</fullName>
    </recommendedName>
    <alternativeName>
        <fullName evidence="2">30S ribosomal protein S19</fullName>
    </alternativeName>
</protein>
<reference key="1">
    <citation type="journal article" date="2007" name="J. Bacteriol.">
        <title>The genome sequence of avian pathogenic Escherichia coli strain O1:K1:H7 shares strong similarities with human extraintestinal pathogenic E. coli genomes.</title>
        <authorList>
            <person name="Johnson T.J."/>
            <person name="Kariyawasam S."/>
            <person name="Wannemuehler Y."/>
            <person name="Mangiamele P."/>
            <person name="Johnson S.J."/>
            <person name="Doetkott C."/>
            <person name="Skyberg J.A."/>
            <person name="Lynne A.M."/>
            <person name="Johnson J.R."/>
            <person name="Nolan L.K."/>
        </authorList>
    </citation>
    <scope>NUCLEOTIDE SEQUENCE [LARGE SCALE GENOMIC DNA]</scope>
</reference>
<gene>
    <name evidence="1" type="primary">rpsS</name>
    <name type="ordered locus">Ecok1_33000</name>
    <name type="ORF">APECO1_3134</name>
</gene>
<name>RS19_ECOK1</name>
<sequence>MPRSLKKGPFIDLHLLKKVEKAVESGDKKPLRTWSRRSTIFPNMIGLTIAVHNGRQHVPVFVTDEMVGHKLGEFAPTRTYRGHAADKKAKKK</sequence>